<feature type="initiator methionine" description="Removed" evidence="1">
    <location>
        <position position="1"/>
    </location>
</feature>
<feature type="chain" id="PRO_0000126363" description="Small ribosomal subunit protein uS8">
    <location>
        <begin position="2"/>
        <end position="132"/>
    </location>
</feature>
<evidence type="ECO:0000250" key="1"/>
<evidence type="ECO:0000255" key="2">
    <source>
        <dbReference type="HAMAP-Rule" id="MF_01302"/>
    </source>
</evidence>
<evidence type="ECO:0000305" key="3"/>
<organism>
    <name type="scientific">Bacillus thuringiensis subsp. konkukian (strain 97-27)</name>
    <dbReference type="NCBI Taxonomy" id="281309"/>
    <lineage>
        <taxon>Bacteria</taxon>
        <taxon>Bacillati</taxon>
        <taxon>Bacillota</taxon>
        <taxon>Bacilli</taxon>
        <taxon>Bacillales</taxon>
        <taxon>Bacillaceae</taxon>
        <taxon>Bacillus</taxon>
        <taxon>Bacillus cereus group</taxon>
    </lineage>
</organism>
<reference key="1">
    <citation type="journal article" date="2006" name="J. Bacteriol.">
        <title>Pathogenomic sequence analysis of Bacillus cereus and Bacillus thuringiensis isolates closely related to Bacillus anthracis.</title>
        <authorList>
            <person name="Han C.S."/>
            <person name="Xie G."/>
            <person name="Challacombe J.F."/>
            <person name="Altherr M.R."/>
            <person name="Bhotika S.S."/>
            <person name="Bruce D."/>
            <person name="Campbell C.S."/>
            <person name="Campbell M.L."/>
            <person name="Chen J."/>
            <person name="Chertkov O."/>
            <person name="Cleland C."/>
            <person name="Dimitrijevic M."/>
            <person name="Doggett N.A."/>
            <person name="Fawcett J.J."/>
            <person name="Glavina T."/>
            <person name="Goodwin L.A."/>
            <person name="Hill K.K."/>
            <person name="Hitchcock P."/>
            <person name="Jackson P.J."/>
            <person name="Keim P."/>
            <person name="Kewalramani A.R."/>
            <person name="Longmire J."/>
            <person name="Lucas S."/>
            <person name="Malfatti S."/>
            <person name="McMurry K."/>
            <person name="Meincke L.J."/>
            <person name="Misra M."/>
            <person name="Moseman B.L."/>
            <person name="Mundt M."/>
            <person name="Munk A.C."/>
            <person name="Okinaka R.T."/>
            <person name="Parson-Quintana B."/>
            <person name="Reilly L.P."/>
            <person name="Richardson P."/>
            <person name="Robinson D.L."/>
            <person name="Rubin E."/>
            <person name="Saunders E."/>
            <person name="Tapia R."/>
            <person name="Tesmer J.G."/>
            <person name="Thayer N."/>
            <person name="Thompson L.S."/>
            <person name="Tice H."/>
            <person name="Ticknor L.O."/>
            <person name="Wills P.L."/>
            <person name="Brettin T.S."/>
            <person name="Gilna P."/>
        </authorList>
    </citation>
    <scope>NUCLEOTIDE SEQUENCE [LARGE SCALE GENOMIC DNA]</scope>
    <source>
        <strain>97-27</strain>
    </source>
</reference>
<name>RS8_BACHK</name>
<sequence>MVMTDPIADMLTRIRNANMVRHEKLEVPASKIKKEIAELLKREGFIRDVEYIEDNKQGILRIFLKYGANNERVITGLKRISKPGLRVYAKADEVPRVLNGLGIALVSTSKGVMTDKDARQLQTGGEVVAYVW</sequence>
<proteinExistence type="inferred from homology"/>
<accession>Q6HPP4</accession>
<comment type="function">
    <text evidence="2">One of the primary rRNA binding proteins, it binds directly to 16S rRNA central domain where it helps coordinate assembly of the platform of the 30S subunit.</text>
</comment>
<comment type="subunit">
    <text evidence="2">Part of the 30S ribosomal subunit. Contacts proteins S5 and S12.</text>
</comment>
<comment type="similarity">
    <text evidence="2">Belongs to the universal ribosomal protein uS8 family.</text>
</comment>
<gene>
    <name evidence="2" type="primary">rpsH</name>
    <name type="ordered locus">BT9727_0120</name>
</gene>
<protein>
    <recommendedName>
        <fullName evidence="2">Small ribosomal subunit protein uS8</fullName>
    </recommendedName>
    <alternativeName>
        <fullName evidence="3">30S ribosomal protein S8</fullName>
    </alternativeName>
</protein>
<keyword id="KW-0687">Ribonucleoprotein</keyword>
<keyword id="KW-0689">Ribosomal protein</keyword>
<keyword id="KW-0694">RNA-binding</keyword>
<keyword id="KW-0699">rRNA-binding</keyword>
<dbReference type="EMBL" id="AE017355">
    <property type="protein sequence ID" value="AAT63874.1"/>
    <property type="molecule type" value="Genomic_DNA"/>
</dbReference>
<dbReference type="RefSeq" id="WP_000245511.1">
    <property type="nucleotide sequence ID" value="NC_005957.1"/>
</dbReference>
<dbReference type="RefSeq" id="YP_034476.1">
    <property type="nucleotide sequence ID" value="NC_005957.1"/>
</dbReference>
<dbReference type="SMR" id="Q6HPP4"/>
<dbReference type="GeneID" id="93010929"/>
<dbReference type="KEGG" id="btk:BT9727_0120"/>
<dbReference type="PATRIC" id="fig|281309.8.peg.121"/>
<dbReference type="HOGENOM" id="CLU_098428_0_2_9"/>
<dbReference type="PRO" id="PR:Q6HPP4"/>
<dbReference type="Proteomes" id="UP000001301">
    <property type="component" value="Chromosome"/>
</dbReference>
<dbReference type="GO" id="GO:1990904">
    <property type="term" value="C:ribonucleoprotein complex"/>
    <property type="evidence" value="ECO:0007669"/>
    <property type="project" value="UniProtKB-KW"/>
</dbReference>
<dbReference type="GO" id="GO:0005840">
    <property type="term" value="C:ribosome"/>
    <property type="evidence" value="ECO:0007669"/>
    <property type="project" value="UniProtKB-KW"/>
</dbReference>
<dbReference type="GO" id="GO:0019843">
    <property type="term" value="F:rRNA binding"/>
    <property type="evidence" value="ECO:0007669"/>
    <property type="project" value="UniProtKB-UniRule"/>
</dbReference>
<dbReference type="GO" id="GO:0003735">
    <property type="term" value="F:structural constituent of ribosome"/>
    <property type="evidence" value="ECO:0007669"/>
    <property type="project" value="InterPro"/>
</dbReference>
<dbReference type="GO" id="GO:0006412">
    <property type="term" value="P:translation"/>
    <property type="evidence" value="ECO:0007669"/>
    <property type="project" value="UniProtKB-UniRule"/>
</dbReference>
<dbReference type="FunFam" id="3.30.1370.30:FF:000002">
    <property type="entry name" value="30S ribosomal protein S8"/>
    <property type="match status" value="1"/>
</dbReference>
<dbReference type="FunFam" id="3.30.1490.10:FF:000001">
    <property type="entry name" value="30S ribosomal protein S8"/>
    <property type="match status" value="1"/>
</dbReference>
<dbReference type="Gene3D" id="3.30.1370.30">
    <property type="match status" value="1"/>
</dbReference>
<dbReference type="Gene3D" id="3.30.1490.10">
    <property type="match status" value="1"/>
</dbReference>
<dbReference type="HAMAP" id="MF_01302_B">
    <property type="entry name" value="Ribosomal_uS8_B"/>
    <property type="match status" value="1"/>
</dbReference>
<dbReference type="InterPro" id="IPR000630">
    <property type="entry name" value="Ribosomal_uS8"/>
</dbReference>
<dbReference type="InterPro" id="IPR047863">
    <property type="entry name" value="Ribosomal_uS8_CS"/>
</dbReference>
<dbReference type="InterPro" id="IPR035987">
    <property type="entry name" value="Ribosomal_uS8_sf"/>
</dbReference>
<dbReference type="NCBIfam" id="NF001109">
    <property type="entry name" value="PRK00136.1"/>
    <property type="match status" value="1"/>
</dbReference>
<dbReference type="PANTHER" id="PTHR11758">
    <property type="entry name" value="40S RIBOSOMAL PROTEIN S15A"/>
    <property type="match status" value="1"/>
</dbReference>
<dbReference type="Pfam" id="PF00410">
    <property type="entry name" value="Ribosomal_S8"/>
    <property type="match status" value="1"/>
</dbReference>
<dbReference type="SUPFAM" id="SSF56047">
    <property type="entry name" value="Ribosomal protein S8"/>
    <property type="match status" value="1"/>
</dbReference>
<dbReference type="PROSITE" id="PS00053">
    <property type="entry name" value="RIBOSOMAL_S8"/>
    <property type="match status" value="1"/>
</dbReference>